<dbReference type="EC" id="2.7.1.-" evidence="1"/>
<dbReference type="EMBL" id="CP000152">
    <property type="protein sequence ID" value="ABB11909.1"/>
    <property type="molecule type" value="Genomic_DNA"/>
</dbReference>
<dbReference type="RefSeq" id="WP_011355397.1">
    <property type="nucleotide sequence ID" value="NC_007511.1"/>
</dbReference>
<dbReference type="SMR" id="Q395F2"/>
<dbReference type="GeneID" id="45098130"/>
<dbReference type="KEGG" id="bur:Bcep18194_B1795"/>
<dbReference type="PATRIC" id="fig|482957.22.peg.5527"/>
<dbReference type="HOGENOM" id="CLU_052998_4_0_4"/>
<dbReference type="Proteomes" id="UP000002705">
    <property type="component" value="Chromosome 2"/>
</dbReference>
<dbReference type="GO" id="GO:0003950">
    <property type="term" value="F:NAD+ poly-ADP-ribosyltransferase activity"/>
    <property type="evidence" value="ECO:0007669"/>
    <property type="project" value="InterPro"/>
</dbReference>
<dbReference type="GO" id="GO:0000215">
    <property type="term" value="F:tRNA 2'-phosphotransferase activity"/>
    <property type="evidence" value="ECO:0007669"/>
    <property type="project" value="TreeGrafter"/>
</dbReference>
<dbReference type="GO" id="GO:0006388">
    <property type="term" value="P:tRNA splicing, via endonucleolytic cleavage and ligation"/>
    <property type="evidence" value="ECO:0007669"/>
    <property type="project" value="UniProtKB-UniRule"/>
</dbReference>
<dbReference type="Gene3D" id="3.20.170.30">
    <property type="match status" value="1"/>
</dbReference>
<dbReference type="Gene3D" id="1.10.10.970">
    <property type="entry name" value="RNA 2'-phosphotransferase, Tpt1/KptA family, N-terminal domain"/>
    <property type="match status" value="1"/>
</dbReference>
<dbReference type="HAMAP" id="MF_00299">
    <property type="entry name" value="KptA"/>
    <property type="match status" value="1"/>
</dbReference>
<dbReference type="InterPro" id="IPR002745">
    <property type="entry name" value="Ptrans_KptA/Tpt1"/>
</dbReference>
<dbReference type="InterPro" id="IPR042081">
    <property type="entry name" value="RNA_2'-PTrans_C"/>
</dbReference>
<dbReference type="InterPro" id="IPR022928">
    <property type="entry name" value="RNA_2'-PTrans_KptA"/>
</dbReference>
<dbReference type="InterPro" id="IPR042080">
    <property type="entry name" value="RNA_2'-PTrans_N"/>
</dbReference>
<dbReference type="NCBIfam" id="NF002014">
    <property type="entry name" value="PRK00819.1-4"/>
    <property type="match status" value="1"/>
</dbReference>
<dbReference type="PANTHER" id="PTHR12684">
    <property type="entry name" value="PUTATIVE PHOSPHOTRANSFERASE"/>
    <property type="match status" value="1"/>
</dbReference>
<dbReference type="PANTHER" id="PTHR12684:SF2">
    <property type="entry name" value="TRNA 2'-PHOSPHOTRANSFERASE 1"/>
    <property type="match status" value="1"/>
</dbReference>
<dbReference type="Pfam" id="PF01885">
    <property type="entry name" value="PTS_2-RNA"/>
    <property type="match status" value="1"/>
</dbReference>
<dbReference type="SUPFAM" id="SSF56399">
    <property type="entry name" value="ADP-ribosylation"/>
    <property type="match status" value="1"/>
</dbReference>
<reference key="1">
    <citation type="submission" date="2005-10" db="EMBL/GenBank/DDBJ databases">
        <title>Complete sequence of chromosome 2 of Burkholderia sp. 383.</title>
        <authorList>
            <consortium name="US DOE Joint Genome Institute"/>
            <person name="Copeland A."/>
            <person name="Lucas S."/>
            <person name="Lapidus A."/>
            <person name="Barry K."/>
            <person name="Detter J.C."/>
            <person name="Glavina T."/>
            <person name="Hammon N."/>
            <person name="Israni S."/>
            <person name="Pitluck S."/>
            <person name="Chain P."/>
            <person name="Malfatti S."/>
            <person name="Shin M."/>
            <person name="Vergez L."/>
            <person name="Schmutz J."/>
            <person name="Larimer F."/>
            <person name="Land M."/>
            <person name="Kyrpides N."/>
            <person name="Lykidis A."/>
            <person name="Richardson P."/>
        </authorList>
    </citation>
    <scope>NUCLEOTIDE SEQUENCE [LARGE SCALE GENOMIC DNA]</scope>
    <source>
        <strain>ATCC 17760 / DSM 23089 / LMG 22485 / NCIMB 9086 / R18194 / 383</strain>
    </source>
</reference>
<accession>Q395F2</accession>
<protein>
    <recommendedName>
        <fullName evidence="1">Probable RNA 2'-phosphotransferase</fullName>
        <ecNumber evidence="1">2.7.1.-</ecNumber>
    </recommendedName>
</protein>
<gene>
    <name evidence="1" type="primary">kptA</name>
    <name type="ordered locus">Bcep18194_B1795</name>
</gene>
<sequence>MNTKKNELPAPDATRISRTLSYLLRHAPQTIGLQLDPEGWADIDELIAGIARQGLHLDRATLETVCATNDKQRFALSDDGRRIRAVQGHSTPVVQRRYPAAQPPERLYHGTATRFLDSIRAQGLKPGARHHVHLSPDIRTALAVGTRYGVPVILEVDAQRMHRQGHTFFVAENGVWLTDTVPAEFLKEMDQPAR</sequence>
<organism>
    <name type="scientific">Burkholderia lata (strain ATCC 17760 / DSM 23089 / LMG 22485 / NCIMB 9086 / R18194 / 383)</name>
    <dbReference type="NCBI Taxonomy" id="482957"/>
    <lineage>
        <taxon>Bacteria</taxon>
        <taxon>Pseudomonadati</taxon>
        <taxon>Pseudomonadota</taxon>
        <taxon>Betaproteobacteria</taxon>
        <taxon>Burkholderiales</taxon>
        <taxon>Burkholderiaceae</taxon>
        <taxon>Burkholderia</taxon>
        <taxon>Burkholderia cepacia complex</taxon>
    </lineage>
</organism>
<feature type="chain" id="PRO_0000231952" description="Probable RNA 2'-phosphotransferase">
    <location>
        <begin position="1"/>
        <end position="194"/>
    </location>
</feature>
<evidence type="ECO:0000255" key="1">
    <source>
        <dbReference type="HAMAP-Rule" id="MF_00299"/>
    </source>
</evidence>
<keyword id="KW-0520">NAD</keyword>
<keyword id="KW-0808">Transferase</keyword>
<comment type="function">
    <text evidence="1">Removes the 2'-phosphate from RNA via an intermediate in which the phosphate is ADP-ribosylated by NAD followed by a presumed transesterification to release the RNA and generate ADP-ribose 1''-2''-cyclic phosphate (APPR&gt;P). May function as an ADP-ribosylase.</text>
</comment>
<comment type="similarity">
    <text evidence="1">Belongs to the KptA/TPT1 family.</text>
</comment>
<name>KPTA_BURL3</name>
<proteinExistence type="inferred from homology"/>